<gene>
    <name type="primary">rps4</name>
    <name type="ORF">9311052</name>
</gene>
<proteinExistence type="inferred from homology"/>
<comment type="function">
    <text evidence="1">One of the primary rRNA binding proteins, it binds directly to 16S rRNA where it nucleates assembly of the body of the 30S subunit.</text>
</comment>
<comment type="function">
    <text evidence="1">With S5 and S12 plays an important role in translational accuracy.</text>
</comment>
<comment type="subunit">
    <text evidence="1">Part of the 30S ribosomal subunit. Contacts protein S5. The interaction surface between S4 and S5 is involved in control of translational fidelity (By similarity).</text>
</comment>
<comment type="subcellular location">
    <subcellularLocation>
        <location>Plastid</location>
        <location>Chloroplast</location>
    </subcellularLocation>
</comment>
<comment type="similarity">
    <text evidence="3">Belongs to the universal ribosomal protein uS4 family.</text>
</comment>
<feature type="chain" id="PRO_0000290083" description="Small ribosomal subunit protein uS4c">
    <location>
        <begin position="1"/>
        <end position="201"/>
    </location>
</feature>
<feature type="domain" description="S4 RNA-binding">
    <location>
        <begin position="89"/>
        <end position="150"/>
    </location>
</feature>
<feature type="region of interest" description="Disordered" evidence="2">
    <location>
        <begin position="20"/>
        <end position="39"/>
    </location>
</feature>
<organism>
    <name type="scientific">Oryza sativa subsp. indica</name>
    <name type="common">Rice</name>
    <dbReference type="NCBI Taxonomy" id="39946"/>
    <lineage>
        <taxon>Eukaryota</taxon>
        <taxon>Viridiplantae</taxon>
        <taxon>Streptophyta</taxon>
        <taxon>Embryophyta</taxon>
        <taxon>Tracheophyta</taxon>
        <taxon>Spermatophyta</taxon>
        <taxon>Magnoliopsida</taxon>
        <taxon>Liliopsida</taxon>
        <taxon>Poales</taxon>
        <taxon>Poaceae</taxon>
        <taxon>BOP clade</taxon>
        <taxon>Oryzoideae</taxon>
        <taxon>Oryzeae</taxon>
        <taxon>Oryzinae</taxon>
        <taxon>Oryza</taxon>
        <taxon>Oryza sativa</taxon>
    </lineage>
</organism>
<accession>P0C487</accession>
<accession>P12147</accession>
<accession>Q6QY73</accession>
<accession>Q7G222</accession>
<sequence>MSRYRGPRFKKIRRLGALPGLTRKTPKSGSNLKKKFHSGKKEQYRIRLQEKQKLRFHYGLTERQLLRYVHIAGKAKSSTGQVLLQLLEMRLDNILFRLGMASTIPEARQLVNHRHILVNGRIVDIPSFRCKPRDIITTKDNQRSKRLVQNSIASSDPGKLPKHLTIDTLQYKGLVKKILDRKWVGLKINELLVVEYYSRQT</sequence>
<protein>
    <recommendedName>
        <fullName evidence="3">Small ribosomal subunit protein uS4c</fullName>
    </recommendedName>
    <alternativeName>
        <fullName>30S ribosomal protein S4, chloroplastic</fullName>
    </alternativeName>
</protein>
<dbReference type="EMBL" id="AY522329">
    <property type="protein sequence ID" value="AAS46056.1"/>
    <property type="molecule type" value="Genomic_DNA"/>
</dbReference>
<dbReference type="RefSeq" id="YP_009161366.1">
    <property type="nucleotide sequence ID" value="NC_027678.1"/>
</dbReference>
<dbReference type="RefSeq" id="YP_654216.1">
    <property type="nucleotide sequence ID" value="NC_008155.1"/>
</dbReference>
<dbReference type="SMR" id="P0C487"/>
<dbReference type="STRING" id="39946.P0C487"/>
<dbReference type="GeneID" id="4126886"/>
<dbReference type="Proteomes" id="UP000007015">
    <property type="component" value="Chloroplast"/>
</dbReference>
<dbReference type="GO" id="GO:0009507">
    <property type="term" value="C:chloroplast"/>
    <property type="evidence" value="ECO:0007669"/>
    <property type="project" value="UniProtKB-SubCell"/>
</dbReference>
<dbReference type="GO" id="GO:0009536">
    <property type="term" value="C:plastid"/>
    <property type="evidence" value="ECO:0000305"/>
    <property type="project" value="Gramene"/>
</dbReference>
<dbReference type="GO" id="GO:0015935">
    <property type="term" value="C:small ribosomal subunit"/>
    <property type="evidence" value="ECO:0007669"/>
    <property type="project" value="InterPro"/>
</dbReference>
<dbReference type="GO" id="GO:0019843">
    <property type="term" value="F:rRNA binding"/>
    <property type="evidence" value="ECO:0007669"/>
    <property type="project" value="UniProtKB-UniRule"/>
</dbReference>
<dbReference type="GO" id="GO:0003735">
    <property type="term" value="F:structural constituent of ribosome"/>
    <property type="evidence" value="ECO:0007669"/>
    <property type="project" value="InterPro"/>
</dbReference>
<dbReference type="GO" id="GO:0042274">
    <property type="term" value="P:ribosomal small subunit biogenesis"/>
    <property type="evidence" value="ECO:0007669"/>
    <property type="project" value="TreeGrafter"/>
</dbReference>
<dbReference type="GO" id="GO:0006412">
    <property type="term" value="P:translation"/>
    <property type="evidence" value="ECO:0007669"/>
    <property type="project" value="UniProtKB-UniRule"/>
</dbReference>
<dbReference type="CDD" id="cd00165">
    <property type="entry name" value="S4"/>
    <property type="match status" value="1"/>
</dbReference>
<dbReference type="FunFam" id="1.10.1050.10:FF:000002">
    <property type="entry name" value="30S ribosomal protein S4, chloroplastic"/>
    <property type="match status" value="1"/>
</dbReference>
<dbReference type="FunFam" id="3.10.290.10:FF:000081">
    <property type="entry name" value="30S ribosomal protein S4, chloroplastic"/>
    <property type="match status" value="1"/>
</dbReference>
<dbReference type="Gene3D" id="1.10.1050.10">
    <property type="entry name" value="Ribosomal Protein S4 Delta 41, Chain A, domain 1"/>
    <property type="match status" value="1"/>
</dbReference>
<dbReference type="Gene3D" id="3.10.290.10">
    <property type="entry name" value="RNA-binding S4 domain"/>
    <property type="match status" value="1"/>
</dbReference>
<dbReference type="HAMAP" id="MF_01306_B">
    <property type="entry name" value="Ribosomal_uS4_B"/>
    <property type="match status" value="1"/>
</dbReference>
<dbReference type="InterPro" id="IPR022801">
    <property type="entry name" value="Ribosomal_uS4"/>
</dbReference>
<dbReference type="InterPro" id="IPR005709">
    <property type="entry name" value="Ribosomal_uS4_bac-type"/>
</dbReference>
<dbReference type="InterPro" id="IPR018079">
    <property type="entry name" value="Ribosomal_uS4_CS"/>
</dbReference>
<dbReference type="InterPro" id="IPR001912">
    <property type="entry name" value="Ribosomal_uS4_N"/>
</dbReference>
<dbReference type="InterPro" id="IPR002942">
    <property type="entry name" value="S4_RNA-bd"/>
</dbReference>
<dbReference type="InterPro" id="IPR036986">
    <property type="entry name" value="S4_RNA-bd_sf"/>
</dbReference>
<dbReference type="NCBIfam" id="NF003717">
    <property type="entry name" value="PRK05327.1"/>
    <property type="match status" value="1"/>
</dbReference>
<dbReference type="NCBIfam" id="TIGR01017">
    <property type="entry name" value="rpsD_bact"/>
    <property type="match status" value="1"/>
</dbReference>
<dbReference type="PANTHER" id="PTHR11831">
    <property type="entry name" value="30S 40S RIBOSOMAL PROTEIN"/>
    <property type="match status" value="1"/>
</dbReference>
<dbReference type="PANTHER" id="PTHR11831:SF4">
    <property type="entry name" value="SMALL RIBOSOMAL SUBUNIT PROTEIN US4M"/>
    <property type="match status" value="1"/>
</dbReference>
<dbReference type="Pfam" id="PF00163">
    <property type="entry name" value="Ribosomal_S4"/>
    <property type="match status" value="1"/>
</dbReference>
<dbReference type="Pfam" id="PF01479">
    <property type="entry name" value="S4"/>
    <property type="match status" value="1"/>
</dbReference>
<dbReference type="SMART" id="SM01390">
    <property type="entry name" value="Ribosomal_S4"/>
    <property type="match status" value="1"/>
</dbReference>
<dbReference type="SMART" id="SM00363">
    <property type="entry name" value="S4"/>
    <property type="match status" value="1"/>
</dbReference>
<dbReference type="SUPFAM" id="SSF55174">
    <property type="entry name" value="Alpha-L RNA-binding motif"/>
    <property type="match status" value="1"/>
</dbReference>
<dbReference type="PROSITE" id="PS00632">
    <property type="entry name" value="RIBOSOMAL_S4"/>
    <property type="match status" value="1"/>
</dbReference>
<dbReference type="PROSITE" id="PS50889">
    <property type="entry name" value="S4"/>
    <property type="match status" value="1"/>
</dbReference>
<reference key="1">
    <citation type="journal article" date="2004" name="Plant Physiol.">
        <title>A comparison of rice chloroplast genomes.</title>
        <authorList>
            <person name="Tang J."/>
            <person name="Xia H."/>
            <person name="Cao M."/>
            <person name="Zhang X."/>
            <person name="Zeng W."/>
            <person name="Hu S."/>
            <person name="Tong W."/>
            <person name="Wang J."/>
            <person name="Wang J."/>
            <person name="Yu J."/>
            <person name="Yang H."/>
            <person name="Zhu L."/>
        </authorList>
    </citation>
    <scope>NUCLEOTIDE SEQUENCE [LARGE SCALE GENOMIC DNA]</scope>
    <source>
        <strain>cv. 93-11</strain>
    </source>
</reference>
<geneLocation type="chloroplast"/>
<keyword id="KW-0150">Chloroplast</keyword>
<keyword id="KW-0934">Plastid</keyword>
<keyword id="KW-1185">Reference proteome</keyword>
<keyword id="KW-0687">Ribonucleoprotein</keyword>
<keyword id="KW-0689">Ribosomal protein</keyword>
<keyword id="KW-0694">RNA-binding</keyword>
<keyword id="KW-0699">rRNA-binding</keyword>
<name>RR4_ORYSI</name>
<evidence type="ECO:0000250" key="1"/>
<evidence type="ECO:0000256" key="2">
    <source>
        <dbReference type="SAM" id="MobiDB-lite"/>
    </source>
</evidence>
<evidence type="ECO:0000305" key="3"/>